<dbReference type="EMBL" id="AF055036">
    <property type="protein sequence ID" value="AAD43831.1"/>
    <property type="molecule type" value="Genomic_DNA"/>
</dbReference>
<dbReference type="EMBL" id="CU329671">
    <property type="protein sequence ID" value="CAB58969.1"/>
    <property type="molecule type" value="Genomic_DNA"/>
</dbReference>
<dbReference type="EMBL" id="AB027816">
    <property type="protein sequence ID" value="BAA87120.1"/>
    <property type="status" value="ALT_INIT"/>
    <property type="molecule type" value="Genomic_DNA"/>
</dbReference>
<dbReference type="PIR" id="T43683">
    <property type="entry name" value="T43683"/>
</dbReference>
<dbReference type="RefSeq" id="NP_595996.1">
    <property type="nucleotide sequence ID" value="NM_001021904.2"/>
</dbReference>
<dbReference type="SMR" id="Q9Y8G3"/>
<dbReference type="BioGRID" id="277250">
    <property type="interactions" value="76"/>
</dbReference>
<dbReference type="ComplexPortal" id="CPX-8938">
    <property type="entry name" value="MEX67-NXT1 mRNA nuclear export factor complex"/>
</dbReference>
<dbReference type="FunCoup" id="Q9Y8G3">
    <property type="interactions" value="421"/>
</dbReference>
<dbReference type="IntAct" id="Q9Y8G3">
    <property type="interactions" value="1"/>
</dbReference>
<dbReference type="STRING" id="284812.Q9Y8G3"/>
<dbReference type="iPTMnet" id="Q9Y8G3"/>
<dbReference type="PaxDb" id="4896-SPBC1921.03c.1"/>
<dbReference type="EnsemblFungi" id="SPBC1921.03c.1">
    <property type="protein sequence ID" value="SPBC1921.03c.1:pep"/>
    <property type="gene ID" value="SPBC1921.03c"/>
</dbReference>
<dbReference type="GeneID" id="2540727"/>
<dbReference type="KEGG" id="spo:2540727"/>
<dbReference type="PomBase" id="SPBC1921.03c">
    <property type="gene designation" value="mex67"/>
</dbReference>
<dbReference type="VEuPathDB" id="FungiDB:SPBC1921.03c"/>
<dbReference type="eggNOG" id="KOG3763">
    <property type="taxonomic scope" value="Eukaryota"/>
</dbReference>
<dbReference type="HOGENOM" id="CLU_024991_1_1_1"/>
<dbReference type="InParanoid" id="Q9Y8G3"/>
<dbReference type="OMA" id="KLEWAPW"/>
<dbReference type="PhylomeDB" id="Q9Y8G3"/>
<dbReference type="Reactome" id="R-SPO-159227">
    <property type="pathway name" value="Transport of the SLBP independent Mature mRNA"/>
</dbReference>
<dbReference type="Reactome" id="R-SPO-159231">
    <property type="pathway name" value="Transport of Mature mRNA Derived from an Intronless Transcript"/>
</dbReference>
<dbReference type="Reactome" id="R-SPO-159236">
    <property type="pathway name" value="Transport of Mature mRNA derived from an Intron-Containing Transcript"/>
</dbReference>
<dbReference type="PRO" id="PR:Q9Y8G3"/>
<dbReference type="Proteomes" id="UP000002485">
    <property type="component" value="Chromosome II"/>
</dbReference>
<dbReference type="GO" id="GO:0005829">
    <property type="term" value="C:cytosol"/>
    <property type="evidence" value="ECO:0007005"/>
    <property type="project" value="PomBase"/>
</dbReference>
<dbReference type="GO" id="GO:0005643">
    <property type="term" value="C:nuclear pore"/>
    <property type="evidence" value="ECO:0000266"/>
    <property type="project" value="PomBase"/>
</dbReference>
<dbReference type="GO" id="GO:0042272">
    <property type="term" value="C:nuclear RNA export factor complex"/>
    <property type="evidence" value="ECO:0000353"/>
    <property type="project" value="PomBase"/>
</dbReference>
<dbReference type="GO" id="GO:0140602">
    <property type="term" value="C:nucleolar peripheral inclusion body"/>
    <property type="evidence" value="ECO:0000314"/>
    <property type="project" value="PomBase"/>
</dbReference>
<dbReference type="GO" id="GO:0005730">
    <property type="term" value="C:nucleolus"/>
    <property type="evidence" value="ECO:0000314"/>
    <property type="project" value="PomBase"/>
</dbReference>
<dbReference type="GO" id="GO:0005634">
    <property type="term" value="C:nucleus"/>
    <property type="evidence" value="ECO:0000314"/>
    <property type="project" value="PomBase"/>
</dbReference>
<dbReference type="GO" id="GO:0003723">
    <property type="term" value="F:RNA binding"/>
    <property type="evidence" value="ECO:0000318"/>
    <property type="project" value="GO_Central"/>
</dbReference>
<dbReference type="GO" id="GO:0016973">
    <property type="term" value="P:poly(A)+ mRNA export from nucleus"/>
    <property type="evidence" value="ECO:0000316"/>
    <property type="project" value="PomBase"/>
</dbReference>
<dbReference type="GO" id="GO:0000055">
    <property type="term" value="P:ribosomal large subunit export from nucleus"/>
    <property type="evidence" value="ECO:0000266"/>
    <property type="project" value="PomBase"/>
</dbReference>
<dbReference type="GO" id="GO:0006409">
    <property type="term" value="P:tRNA export from nucleus"/>
    <property type="evidence" value="ECO:0000303"/>
    <property type="project" value="PomBase"/>
</dbReference>
<dbReference type="CDD" id="cd14342">
    <property type="entry name" value="UBA_TAP-C"/>
    <property type="match status" value="1"/>
</dbReference>
<dbReference type="FunFam" id="3.10.450.50:FF:000013">
    <property type="entry name" value="mRNA export factor mex67"/>
    <property type="match status" value="1"/>
</dbReference>
<dbReference type="FunFam" id="1.10.8.10:FF:000018">
    <property type="entry name" value="Nuclear RNA export factor 1"/>
    <property type="match status" value="1"/>
</dbReference>
<dbReference type="Gene3D" id="3.10.450.50">
    <property type="match status" value="1"/>
</dbReference>
<dbReference type="Gene3D" id="1.10.8.10">
    <property type="entry name" value="DNA helicase RuvA subunit, C-terminal domain"/>
    <property type="match status" value="1"/>
</dbReference>
<dbReference type="Gene3D" id="3.80.10.10">
    <property type="entry name" value="Ribonuclease Inhibitor"/>
    <property type="match status" value="1"/>
</dbReference>
<dbReference type="InterPro" id="IPR001611">
    <property type="entry name" value="Leu-rich_rpt"/>
</dbReference>
<dbReference type="InterPro" id="IPR032675">
    <property type="entry name" value="LRR_dom_sf"/>
</dbReference>
<dbReference type="InterPro" id="IPR040736">
    <property type="entry name" value="Mex67_RRM"/>
</dbReference>
<dbReference type="InterPro" id="IPR032710">
    <property type="entry name" value="NTF2-like_dom_sf"/>
</dbReference>
<dbReference type="InterPro" id="IPR002075">
    <property type="entry name" value="NTF2_dom"/>
</dbReference>
<dbReference type="InterPro" id="IPR018222">
    <property type="entry name" value="Nuclear_transport_factor_2_euk"/>
</dbReference>
<dbReference type="InterPro" id="IPR030217">
    <property type="entry name" value="NXF_fam"/>
</dbReference>
<dbReference type="InterPro" id="IPR005637">
    <property type="entry name" value="TAP_C_dom"/>
</dbReference>
<dbReference type="InterPro" id="IPR009060">
    <property type="entry name" value="UBA-like_sf"/>
</dbReference>
<dbReference type="PANTHER" id="PTHR10662">
    <property type="entry name" value="NUCLEAR RNA EXPORT FACTOR"/>
    <property type="match status" value="1"/>
</dbReference>
<dbReference type="PANTHER" id="PTHR10662:SF22">
    <property type="entry name" value="NUCLEAR RNA EXPORT FACTOR 1"/>
    <property type="match status" value="1"/>
</dbReference>
<dbReference type="Pfam" id="PF24048">
    <property type="entry name" value="LRR_NXF1-5"/>
    <property type="match status" value="1"/>
</dbReference>
<dbReference type="Pfam" id="PF22602">
    <property type="entry name" value="NXF_NTF2"/>
    <property type="match status" value="1"/>
</dbReference>
<dbReference type="Pfam" id="PF18444">
    <property type="entry name" value="RRM_9"/>
    <property type="match status" value="1"/>
</dbReference>
<dbReference type="Pfam" id="PF03943">
    <property type="entry name" value="TAP_C"/>
    <property type="match status" value="1"/>
</dbReference>
<dbReference type="SMART" id="SM00804">
    <property type="entry name" value="TAP_C"/>
    <property type="match status" value="1"/>
</dbReference>
<dbReference type="SUPFAM" id="SSF52058">
    <property type="entry name" value="L domain-like"/>
    <property type="match status" value="1"/>
</dbReference>
<dbReference type="SUPFAM" id="SSF54427">
    <property type="entry name" value="NTF2-like"/>
    <property type="match status" value="1"/>
</dbReference>
<dbReference type="SUPFAM" id="SSF46934">
    <property type="entry name" value="UBA-like"/>
    <property type="match status" value="1"/>
</dbReference>
<dbReference type="PROSITE" id="PS51450">
    <property type="entry name" value="LRR"/>
    <property type="match status" value="2"/>
</dbReference>
<dbReference type="PROSITE" id="PS50177">
    <property type="entry name" value="NTF2_DOMAIN"/>
    <property type="match status" value="1"/>
</dbReference>
<dbReference type="PROSITE" id="PS51281">
    <property type="entry name" value="TAP_C"/>
    <property type="match status" value="1"/>
</dbReference>
<protein>
    <recommendedName>
        <fullName>mRNA export factor mex67</fullName>
    </recommendedName>
</protein>
<accession>Q9Y8G3</accession>
<accession>Q9UU47</accession>
<proteinExistence type="evidence at protein level"/>
<keyword id="KW-0963">Cytoplasm</keyword>
<keyword id="KW-0433">Leucine-rich repeat</keyword>
<keyword id="KW-0509">mRNA transport</keyword>
<keyword id="KW-0539">Nucleus</keyword>
<keyword id="KW-0597">Phosphoprotein</keyword>
<keyword id="KW-1185">Reference proteome</keyword>
<keyword id="KW-0677">Repeat</keyword>
<keyword id="KW-0813">Transport</keyword>
<comment type="function">
    <text evidence="3 4 5">Involved in the export of mRNA from the nucleus to the cytoplasm.</text>
</comment>
<comment type="subunit">
    <text evidence="6">Interacts with mlo3 and rae1.</text>
</comment>
<comment type="subcellular location">
    <subcellularLocation>
        <location evidence="5">Nucleus</location>
    </subcellularLocation>
    <subcellularLocation>
        <location evidence="5 7">Cytoplasm</location>
    </subcellularLocation>
    <text evidence="5">Localizes at both the nuclear and cytoplasmic site of the pores (PubMed:14963046). Shuttles between the nucleus and the cytoplasm (PubMed:14963046).</text>
</comment>
<comment type="domain">
    <text evidence="1">The leucine-rich repeats and the NTF2-domain are essential for the export of mRNA from the nucleus.</text>
</comment>
<comment type="domain">
    <text>The NTF2 domain heterodimerizes with MTR2. The formation of this heterodimer is essential for mRNA export and binds to all of the nucleoporin-FG-repeats.</text>
</comment>
<comment type="domain">
    <text>The RNA-binding domain is conserved in most NXF proteins but may be absent in yeasts.</text>
</comment>
<comment type="similarity">
    <text evidence="9">Belongs to the NXF family.</text>
</comment>
<comment type="sequence caution" evidence="9">
    <conflict type="erroneous initiation">
        <sequence resource="EMBL-CDS" id="BAA87120"/>
    </conflict>
    <text>Extended N-terminus.</text>
</comment>
<evidence type="ECO:0000250" key="1"/>
<evidence type="ECO:0000255" key="2">
    <source>
        <dbReference type="PROSITE-ProRule" id="PRU00137"/>
    </source>
</evidence>
<evidence type="ECO:0000255" key="3">
    <source>
        <dbReference type="PROSITE-ProRule" id="PRU00611"/>
    </source>
</evidence>
<evidence type="ECO:0000269" key="4">
    <source>
    </source>
</evidence>
<evidence type="ECO:0000269" key="5">
    <source>
    </source>
</evidence>
<evidence type="ECO:0000269" key="6">
    <source>
    </source>
</evidence>
<evidence type="ECO:0000269" key="7">
    <source>
    </source>
</evidence>
<evidence type="ECO:0000269" key="8">
    <source>
    </source>
</evidence>
<evidence type="ECO:0000305" key="9"/>
<gene>
    <name type="primary">mex67</name>
    <name type="ORF">SPBC1921.03c</name>
</gene>
<organism>
    <name type="scientific">Schizosaccharomyces pombe (strain 972 / ATCC 24843)</name>
    <name type="common">Fission yeast</name>
    <dbReference type="NCBI Taxonomy" id="284812"/>
    <lineage>
        <taxon>Eukaryota</taxon>
        <taxon>Fungi</taxon>
        <taxon>Dikarya</taxon>
        <taxon>Ascomycota</taxon>
        <taxon>Taphrinomycotina</taxon>
        <taxon>Schizosaccharomycetes</taxon>
        <taxon>Schizosaccharomycetales</taxon>
        <taxon>Schizosaccharomycetaceae</taxon>
        <taxon>Schizosaccharomyces</taxon>
    </lineage>
</organism>
<reference key="1">
    <citation type="journal article" date="2000" name="Mol. Cell. Biol.">
        <title>Mex67p of Schizosaccharomyces pombe interacts with Rae1p in mediating mRNA export.</title>
        <authorList>
            <person name="Yoon J.H."/>
            <person name="Love D.C."/>
            <person name="Guhathakurta A."/>
            <person name="Hanover J.A."/>
            <person name="Dhar R."/>
        </authorList>
    </citation>
    <scope>NUCLEOTIDE SEQUENCE [GENOMIC DNA]</scope>
    <scope>FUNCTION</scope>
    <source>
        <strain>972 / ATCC 24843</strain>
    </source>
</reference>
<reference key="2">
    <citation type="journal article" date="2002" name="Nature">
        <title>The genome sequence of Schizosaccharomyces pombe.</title>
        <authorList>
            <person name="Wood V."/>
            <person name="Gwilliam R."/>
            <person name="Rajandream M.A."/>
            <person name="Lyne M.H."/>
            <person name="Lyne R."/>
            <person name="Stewart A."/>
            <person name="Sgouros J.G."/>
            <person name="Peat N."/>
            <person name="Hayles J."/>
            <person name="Baker S.G."/>
            <person name="Basham D."/>
            <person name="Bowman S."/>
            <person name="Brooks K."/>
            <person name="Brown D."/>
            <person name="Brown S."/>
            <person name="Chillingworth T."/>
            <person name="Churcher C.M."/>
            <person name="Collins M."/>
            <person name="Connor R."/>
            <person name="Cronin A."/>
            <person name="Davis P."/>
            <person name="Feltwell T."/>
            <person name="Fraser A."/>
            <person name="Gentles S."/>
            <person name="Goble A."/>
            <person name="Hamlin N."/>
            <person name="Harris D.E."/>
            <person name="Hidalgo J."/>
            <person name="Hodgson G."/>
            <person name="Holroyd S."/>
            <person name="Hornsby T."/>
            <person name="Howarth S."/>
            <person name="Huckle E.J."/>
            <person name="Hunt S."/>
            <person name="Jagels K."/>
            <person name="James K.D."/>
            <person name="Jones L."/>
            <person name="Jones M."/>
            <person name="Leather S."/>
            <person name="McDonald S."/>
            <person name="McLean J."/>
            <person name="Mooney P."/>
            <person name="Moule S."/>
            <person name="Mungall K.L."/>
            <person name="Murphy L.D."/>
            <person name="Niblett D."/>
            <person name="Odell C."/>
            <person name="Oliver K."/>
            <person name="O'Neil S."/>
            <person name="Pearson D."/>
            <person name="Quail M.A."/>
            <person name="Rabbinowitsch E."/>
            <person name="Rutherford K.M."/>
            <person name="Rutter S."/>
            <person name="Saunders D."/>
            <person name="Seeger K."/>
            <person name="Sharp S."/>
            <person name="Skelton J."/>
            <person name="Simmonds M.N."/>
            <person name="Squares R."/>
            <person name="Squares S."/>
            <person name="Stevens K."/>
            <person name="Taylor K."/>
            <person name="Taylor R.G."/>
            <person name="Tivey A."/>
            <person name="Walsh S.V."/>
            <person name="Warren T."/>
            <person name="Whitehead S."/>
            <person name="Woodward J.R."/>
            <person name="Volckaert G."/>
            <person name="Aert R."/>
            <person name="Robben J."/>
            <person name="Grymonprez B."/>
            <person name="Weltjens I."/>
            <person name="Vanstreels E."/>
            <person name="Rieger M."/>
            <person name="Schaefer M."/>
            <person name="Mueller-Auer S."/>
            <person name="Gabel C."/>
            <person name="Fuchs M."/>
            <person name="Duesterhoeft A."/>
            <person name="Fritzc C."/>
            <person name="Holzer E."/>
            <person name="Moestl D."/>
            <person name="Hilbert H."/>
            <person name="Borzym K."/>
            <person name="Langer I."/>
            <person name="Beck A."/>
            <person name="Lehrach H."/>
            <person name="Reinhardt R."/>
            <person name="Pohl T.M."/>
            <person name="Eger P."/>
            <person name="Zimmermann W."/>
            <person name="Wedler H."/>
            <person name="Wambutt R."/>
            <person name="Purnelle B."/>
            <person name="Goffeau A."/>
            <person name="Cadieu E."/>
            <person name="Dreano S."/>
            <person name="Gloux S."/>
            <person name="Lelaure V."/>
            <person name="Mottier S."/>
            <person name="Galibert F."/>
            <person name="Aves S.J."/>
            <person name="Xiang Z."/>
            <person name="Hunt C."/>
            <person name="Moore K."/>
            <person name="Hurst S.M."/>
            <person name="Lucas M."/>
            <person name="Rochet M."/>
            <person name="Gaillardin C."/>
            <person name="Tallada V.A."/>
            <person name="Garzon A."/>
            <person name="Thode G."/>
            <person name="Daga R.R."/>
            <person name="Cruzado L."/>
            <person name="Jimenez J."/>
            <person name="Sanchez M."/>
            <person name="del Rey F."/>
            <person name="Benito J."/>
            <person name="Dominguez A."/>
            <person name="Revuelta J.L."/>
            <person name="Moreno S."/>
            <person name="Armstrong J."/>
            <person name="Forsburg S.L."/>
            <person name="Cerutti L."/>
            <person name="Lowe T."/>
            <person name="McCombie W.R."/>
            <person name="Paulsen I."/>
            <person name="Potashkin J."/>
            <person name="Shpakovski G.V."/>
            <person name="Ussery D."/>
            <person name="Barrell B.G."/>
            <person name="Nurse P."/>
        </authorList>
    </citation>
    <scope>NUCLEOTIDE SEQUENCE [LARGE SCALE GENOMIC DNA]</scope>
    <source>
        <strain>972 / ATCC 24843</strain>
    </source>
</reference>
<reference key="3">
    <citation type="journal article" date="2000" name="Genes Cells">
        <title>Large-scale screening of intracellular protein localization in living fission yeast cells by the use of a GFP-fusion genomic DNA library.</title>
        <authorList>
            <person name="Ding D.-Q."/>
            <person name="Tomita Y."/>
            <person name="Yamamoto A."/>
            <person name="Chikashige Y."/>
            <person name="Haraguchi T."/>
            <person name="Hiraoka Y."/>
        </authorList>
    </citation>
    <scope>NUCLEOTIDE SEQUENCE [LARGE SCALE GENOMIC DNA] OF 1-125</scope>
    <source>
        <strain>ATCC 38364 / 968</strain>
    </source>
</reference>
<reference key="4">
    <citation type="journal article" date="2004" name="J. Biol. Chem.">
        <title>Conserved nuclear export sequences in Schizosaccharomyces pombe Mex67 and human TAP function in mRNA export by direct nuclear pore interactions.</title>
        <authorList>
            <person name="Thakurta A.G."/>
            <person name="Gopal G."/>
            <person name="Yoon J.H."/>
            <person name="Saha T."/>
            <person name="Dhar R."/>
        </authorList>
    </citation>
    <scope>FUNCTION</scope>
    <scope>SUBCELLULAR LOCATION</scope>
    <scope>MUTAGENESIS OF 460-VAL--GLY-462; 478-ARG--THR-479; 492-ILE--ILE-493 AND 494-ASN--ASP-495</scope>
</reference>
<reference key="5">
    <citation type="journal article" date="2005" name="EMBO J.">
        <title>Homolog of BRCA2-interacting Dss1p and Uap56p link Mlo3p and Rae1p for mRNA export in fission yeast.</title>
        <authorList>
            <person name="Thakurta A.G."/>
            <person name="Gopal G."/>
            <person name="Yoon J.H."/>
            <person name="Kozak L."/>
            <person name="Dhar R."/>
        </authorList>
    </citation>
    <scope>INTERACTION WITH MLO3</scope>
</reference>
<reference key="6">
    <citation type="journal article" date="2006" name="Nat. Biotechnol.">
        <title>ORFeome cloning and global analysis of protein localization in the fission yeast Schizosaccharomyces pombe.</title>
        <authorList>
            <person name="Matsuyama A."/>
            <person name="Arai R."/>
            <person name="Yashiroda Y."/>
            <person name="Shirai A."/>
            <person name="Kamata A."/>
            <person name="Sekido S."/>
            <person name="Kobayashi Y."/>
            <person name="Hashimoto A."/>
            <person name="Hamamoto M."/>
            <person name="Hiraoka Y."/>
            <person name="Horinouchi S."/>
            <person name="Yoshida M."/>
        </authorList>
    </citation>
    <scope>SUBCELLULAR LOCATION [LARGE SCALE ANALYSIS]</scope>
</reference>
<reference key="7">
    <citation type="journal article" date="2008" name="J. Proteome Res.">
        <title>Phosphoproteome analysis of fission yeast.</title>
        <authorList>
            <person name="Wilson-Grady J.T."/>
            <person name="Villen J."/>
            <person name="Gygi S.P."/>
        </authorList>
    </citation>
    <scope>PHOSPHORYLATION [LARGE SCALE ANALYSIS] AT SER-128; SER-130 AND SER-133</scope>
    <scope>IDENTIFICATION BY MASS SPECTROMETRY</scope>
</reference>
<sequence>MLRRKRERRNAVKENEMVIDTPLEKRRTPGKPRATREPPISVVITGHSKGSEDDLISFVWRKVKVRLMNISYSPASVTAVVKSQDFSRLNGLNGAAFAGDHLAIRRVDGASNVTQDYRKAKTKRSFRSVSAPSLSALATQAQRNVSKTLPQSTNETIEKLRQFLQTRYQPATKFLDLGNLQQDPLLKQMGILAEASTKSKMFPALMKVASLNFPDVISVSLSDNNLQSVTAVTTLAQTWPKLLNLSLANNRITSLSDLDPWSPKTKLPELQELVLVGNPIVTTFANRAMDYQREMVSRFPKLRLLDGNSINSEIIASQSTVPFPVYQSFFDKVETEQIVNSFLAAFFKGWDENRSALVNQLYSPNATFSISLNASNVRTNFSQKTDTKKWGAYKMKSRNLLYSQSQKESKSRLFNGHEEISNAVKSLPATAHDLSDRSQWVFDGWNLVLPSVGAAIKIVVHGQFEEPQNKRLLRSFDRTLLILPGGSTGILIINDLLVIRSFAGSLGWLPGQSSVRTSNNAMSASASKPSDIVQPRPEQAMLDTRQQIVLKIKAETGLNDYYAHMCCEQNNWDYNSALASFLELKSRNVIPAEAFS</sequence>
<feature type="chain" id="PRO_0000220541" description="mRNA export factor mex67">
    <location>
        <begin position="1"/>
        <end position="596"/>
    </location>
</feature>
<feature type="repeat" description="LRR 1">
    <location>
        <begin position="215"/>
        <end position="236"/>
    </location>
</feature>
<feature type="repeat" description="LRR 2">
    <location>
        <begin position="241"/>
        <end position="262"/>
    </location>
</feature>
<feature type="repeat" description="LRR 3">
    <location>
        <begin position="263"/>
        <end position="282"/>
    </location>
</feature>
<feature type="domain" description="LRRCT">
    <location>
        <begin position="283"/>
        <end position="338"/>
    </location>
</feature>
<feature type="domain" description="NTF2" evidence="2">
    <location>
        <begin position="338"/>
        <end position="499"/>
    </location>
</feature>
<feature type="domain" description="TAP-C" evidence="3">
    <location>
        <begin position="543"/>
        <end position="596"/>
    </location>
</feature>
<feature type="modified residue" description="Phosphoserine" evidence="8">
    <location>
        <position position="128"/>
    </location>
</feature>
<feature type="modified residue" description="Phosphoserine" evidence="8">
    <location>
        <position position="130"/>
    </location>
</feature>
<feature type="modified residue" description="Phosphoserine" evidence="8">
    <location>
        <position position="133"/>
    </location>
</feature>
<feature type="mutagenesis site" description="No mRNA export from nucleus." evidence="5">
    <original>VHG</original>
    <variation>AAA</variation>
    <location>
        <begin position="460"/>
        <end position="462"/>
    </location>
</feature>
<feature type="mutagenesis site" description="Reduced mRNA export from nucleus." evidence="5">
    <original>RT</original>
    <variation>AA</variation>
    <location>
        <begin position="478"/>
        <end position="479"/>
    </location>
</feature>
<feature type="mutagenesis site" description="Reduced mRNA export from nucleus." evidence="5">
    <original>II</original>
    <variation>AA</variation>
    <location>
        <begin position="492"/>
        <end position="493"/>
    </location>
</feature>
<feature type="mutagenesis site" description="Reduced mRNA export from nucleus." evidence="5">
    <original>ND</original>
    <variation>AA</variation>
    <location>
        <begin position="494"/>
        <end position="495"/>
    </location>
</feature>
<name>MEX67_SCHPO</name>